<feature type="signal peptide" description="Tat-type signal" evidence="2">
    <location>
        <begin position="1"/>
        <end position="40"/>
    </location>
</feature>
<feature type="chain" id="PRO_0000435125" description="F420-dependent hydroxymycolic acid dehydrogenase">
    <location>
        <begin position="41"/>
        <end position="360"/>
    </location>
</feature>
<feature type="active site" description="Proton donor" evidence="1">
    <location>
        <position position="78"/>
    </location>
</feature>
<feature type="active site" description="Proton acceptor" evidence="1">
    <location>
        <position position="147"/>
    </location>
</feature>
<feature type="binding site" evidence="1">
    <location>
        <position position="77"/>
    </location>
    <ligand>
        <name>coenzyme F420-(gamma-Glu)n</name>
        <dbReference type="ChEBI" id="CHEBI:133980"/>
    </ligand>
</feature>
<feature type="binding site" evidence="1">
    <location>
        <begin position="145"/>
        <end position="146"/>
    </location>
    <ligand>
        <name>coenzyme F420-(gamma-Glu)n</name>
        <dbReference type="ChEBI" id="CHEBI:133980"/>
    </ligand>
</feature>
<feature type="binding site" evidence="1">
    <location>
        <position position="150"/>
    </location>
    <ligand>
        <name>coenzyme F420-(gamma-Glu)n</name>
        <dbReference type="ChEBI" id="CHEBI:133980"/>
    </ligand>
</feature>
<feature type="binding site" evidence="1">
    <location>
        <begin position="213"/>
        <end position="214"/>
    </location>
    <ligand>
        <name>coenzyme F420-(gamma-Glu)n</name>
        <dbReference type="ChEBI" id="CHEBI:133980"/>
    </ligand>
</feature>
<proteinExistence type="evidence at protein level"/>
<organism>
    <name type="scientific">Mycobacterium tuberculosis (strain ATCC 25618 / H37Rv)</name>
    <dbReference type="NCBI Taxonomy" id="83332"/>
    <lineage>
        <taxon>Bacteria</taxon>
        <taxon>Bacillati</taxon>
        <taxon>Actinomycetota</taxon>
        <taxon>Actinomycetes</taxon>
        <taxon>Mycobacteriales</taxon>
        <taxon>Mycobacteriaceae</taxon>
        <taxon>Mycobacterium</taxon>
        <taxon>Mycobacterium tuberculosis complex</taxon>
    </lineage>
</organism>
<reference key="1">
    <citation type="journal article" date="1998" name="Nature">
        <title>Deciphering the biology of Mycobacterium tuberculosis from the complete genome sequence.</title>
        <authorList>
            <person name="Cole S.T."/>
            <person name="Brosch R."/>
            <person name="Parkhill J."/>
            <person name="Garnier T."/>
            <person name="Churcher C.M."/>
            <person name="Harris D.E."/>
            <person name="Gordon S.V."/>
            <person name="Eiglmeier K."/>
            <person name="Gas S."/>
            <person name="Barry C.E. III"/>
            <person name="Tekaia F."/>
            <person name="Badcock K."/>
            <person name="Basham D."/>
            <person name="Brown D."/>
            <person name="Chillingworth T."/>
            <person name="Connor R."/>
            <person name="Davies R.M."/>
            <person name="Devlin K."/>
            <person name="Feltwell T."/>
            <person name="Gentles S."/>
            <person name="Hamlin N."/>
            <person name="Holroyd S."/>
            <person name="Hornsby T."/>
            <person name="Jagels K."/>
            <person name="Krogh A."/>
            <person name="McLean J."/>
            <person name="Moule S."/>
            <person name="Murphy L.D."/>
            <person name="Oliver S."/>
            <person name="Osborne J."/>
            <person name="Quail M.A."/>
            <person name="Rajandream M.A."/>
            <person name="Rogers J."/>
            <person name="Rutter S."/>
            <person name="Seeger K."/>
            <person name="Skelton S."/>
            <person name="Squares S."/>
            <person name="Squares R."/>
            <person name="Sulston J.E."/>
            <person name="Taylor K."/>
            <person name="Whitehead S."/>
            <person name="Barrell B.G."/>
        </authorList>
    </citation>
    <scope>NUCLEOTIDE SEQUENCE [LARGE SCALE GENOMIC DNA]</scope>
    <source>
        <strain>ATCC 25618 / H37Rv</strain>
    </source>
</reference>
<reference key="2">
    <citation type="journal article" date="2000" name="Nature">
        <title>A small-molecule nitroimidazopyran drug candidate for the treatment of tuberculosis.</title>
        <authorList>
            <person name="Stover C.K."/>
            <person name="Warrener P."/>
            <person name="VanDevanter D.R."/>
            <person name="Sherman D.R."/>
            <person name="Arain T.M."/>
            <person name="Langhorne M.H."/>
            <person name="Anderson S.W."/>
            <person name="Towell J.A."/>
            <person name="Yuan Y."/>
            <person name="McMurray D.N."/>
            <person name="Kreiswirth B.N."/>
            <person name="Barry C.E."/>
            <person name="Baker W.R."/>
        </authorList>
    </citation>
    <scope>ACTIVITY REGULATION</scope>
    <source>
        <strain>ATCC 27294 / TMC 102 / H37Rv</strain>
    </source>
</reference>
<reference key="3">
    <citation type="journal article" date="2012" name="PLoS ONE">
        <title>Tat-dependent translocation of an F420-binding protein of Mycobacterium tuberculosis.</title>
        <authorList>
            <person name="Bashiri G."/>
            <person name="Perkowski E.F."/>
            <person name="Turner A.P."/>
            <person name="Feltcher M.E."/>
            <person name="Braunstein M."/>
            <person name="Baker E.N."/>
        </authorList>
    </citation>
    <scope>SUBSTRATE FOR THE TAT PATHWAY</scope>
    <scope>F420-BINDING</scope>
    <scope>SUBCELLULAR LOCATION</scope>
    <scope>SUBUNIT</scope>
    <source>
        <strain>H37Rv</strain>
    </source>
</reference>
<reference key="4">
    <citation type="journal article" date="2013" name="PLoS ONE">
        <title>Rv0132c of Mycobacterium tuberculosis encodes a coenzyme F420-dependent hydroxymycolic acid dehydrogenase.</title>
        <authorList>
            <person name="Purwantini E."/>
            <person name="Mukhopadhyay B."/>
        </authorList>
    </citation>
    <scope>FUNCTION</scope>
    <scope>CATALYTIC ACTIVITY</scope>
    <scope>ACTIVITY REGULATION</scope>
    <scope>PATHWAY</scope>
    <scope>DRUG TARGET</scope>
</reference>
<protein>
    <recommendedName>
        <fullName evidence="7">F420-dependent hydroxymycolic acid dehydrogenase</fullName>
        <shortName evidence="7">fHMAD</shortName>
        <ecNumber evidence="5">1.1.98.-</ecNumber>
    </recommendedName>
    <alternativeName>
        <fullName evidence="6">FGD2</fullName>
    </alternativeName>
</protein>
<comment type="function">
    <text evidence="4 5">Catalyzes the coenzyme F420-dependent oxidation of hydroxymycolic acids (H-MAs) to ketomycolic acids (K-MAs), a lipid class making up the mycobacterial pseudo-outer membrane and over one-third of the dry weight of M.tuberculosis (PubMed:24349169). Does not exhibit F420-dependent glucose-6-phosphate dehydrogenase (FGD) activity (PubMed:23110042).</text>
</comment>
<comment type="activity regulation">
    <text evidence="3 5">Is inhibited by the anti-tuberculous drug PA-824, a bicyclic 4-nitroimidazole class compound (PubMed:24349169). Therefore, this is consistent with the finding that PA-824 inhibits the formation of K-MAs and causes an accumulation of hydroxymycolic acids (H-MAs) in M.tuberculosis (PubMed:10879539).</text>
</comment>
<comment type="pathway">
    <text evidence="5">Lipid metabolism; mycolic acid biosynthesis.</text>
</comment>
<comment type="subunit">
    <text evidence="4">Homodimer.</text>
</comment>
<comment type="subcellular location">
    <subcellularLocation>
        <location evidence="4">Cell envelope</location>
    </subcellularLocation>
    <text evidence="4">The Rv0132c-F420 complex is translocated via the Tat pathway across the cytoplasmic membrane, where Rv0132c is anchored to the cell envelope.</text>
</comment>
<comment type="PTM">
    <text evidence="4">Is exported by the Tat system. The position of the signal peptide cleavage has not been experimentally proven.</text>
</comment>
<comment type="PTM">
    <text evidence="9">May be lipidated.</text>
</comment>
<comment type="similarity">
    <text evidence="8">Belongs to the F420-dependent hydroxymycolic acid dehydrogenase family.</text>
</comment>
<keyword id="KW-0444">Lipid biosynthesis</keyword>
<keyword id="KW-0443">Lipid metabolism</keyword>
<keyword id="KW-0560">Oxidoreductase</keyword>
<keyword id="KW-1185">Reference proteome</keyword>
<keyword id="KW-0732">Signal</keyword>
<sequence length="360" mass="38445">MTGISRRTFGLAAGFGAIGAGGLGGGCSTRSGPTPTPEPASRGVGVVLSHEQFRTDRLVAHAQAAEQAGFRYVWASDHLQPWQDNEGHSMFPWLTLALVGNSTSSILFGTGVTCPIYRYHPATVAQAFASLAILNPGRVFLGLGTGERLNEQAATDTFGNYRERHDRLIEAIVLIRQLWSGERISFTGHYFRTDELKLYDTPAMPPPIFVAASGPQSATLAGRYGDGWIAQARDINDAKLLAAFAAGAQAAGRDPTTLGKRAELFAVVGDDKAAARAADLWRFTAGAVDQPNPVEIQRAAESNPIEKVLANWAVGTDPGVHIGAVQAVLDAGAVPFLHFPQDDPITAIDFYRTNVLPELR</sequence>
<name>FHMAD_MYCTU</name>
<accession>P96809</accession>
<accession>F2GLS9</accession>
<accession>I6Y6Z3</accession>
<accession>L0T5M8</accession>
<evidence type="ECO:0000250" key="1">
    <source>
        <dbReference type="UniProtKB" id="P9WNE1"/>
    </source>
</evidence>
<evidence type="ECO:0000255" key="2">
    <source>
        <dbReference type="PROSITE-ProRule" id="PRU00648"/>
    </source>
</evidence>
<evidence type="ECO:0000269" key="3">
    <source>
    </source>
</evidence>
<evidence type="ECO:0000269" key="4">
    <source>
    </source>
</evidence>
<evidence type="ECO:0000269" key="5">
    <source>
    </source>
</evidence>
<evidence type="ECO:0000303" key="6">
    <source>
    </source>
</evidence>
<evidence type="ECO:0000303" key="7">
    <source>
    </source>
</evidence>
<evidence type="ECO:0000305" key="8"/>
<evidence type="ECO:0000305" key="9">
    <source>
    </source>
</evidence>
<evidence type="ECO:0000312" key="10">
    <source>
        <dbReference type="EMBL" id="CCP42857.1"/>
    </source>
</evidence>
<gene>
    <name evidence="10" type="primary">fgd2</name>
    <name evidence="10" type="ordered locus">Rv0132c</name>
</gene>
<dbReference type="EC" id="1.1.98.-" evidence="5"/>
<dbReference type="EMBL" id="AL123456">
    <property type="protein sequence ID" value="CCP42857.1"/>
    <property type="molecule type" value="Genomic_DNA"/>
</dbReference>
<dbReference type="RefSeq" id="NP_214646.1">
    <property type="nucleotide sequence ID" value="NC_000962.3"/>
</dbReference>
<dbReference type="RefSeq" id="WP_003899826.1">
    <property type="nucleotide sequence ID" value="NZ_NVQJ01000001.1"/>
</dbReference>
<dbReference type="SMR" id="P96809"/>
<dbReference type="STRING" id="83332.Rv0132c"/>
<dbReference type="PaxDb" id="83332-Rv0132c"/>
<dbReference type="DNASU" id="886877"/>
<dbReference type="GeneID" id="886877"/>
<dbReference type="KEGG" id="mtu:Rv0132c"/>
<dbReference type="KEGG" id="mtv:RVBD_0132c"/>
<dbReference type="PATRIC" id="fig|83332.111.peg.153"/>
<dbReference type="TubercuList" id="Rv0132c"/>
<dbReference type="eggNOG" id="COG2141">
    <property type="taxonomic scope" value="Bacteria"/>
</dbReference>
<dbReference type="HOGENOM" id="CLU_027853_4_0_11"/>
<dbReference type="InParanoid" id="P96809"/>
<dbReference type="OrthoDB" id="180193at2"/>
<dbReference type="PhylomeDB" id="P96809"/>
<dbReference type="UniPathway" id="UPA00915"/>
<dbReference type="Proteomes" id="UP000001584">
    <property type="component" value="Chromosome"/>
</dbReference>
<dbReference type="GO" id="GO:0030313">
    <property type="term" value="C:cell envelope"/>
    <property type="evidence" value="ECO:0007669"/>
    <property type="project" value="UniProtKB-SubCell"/>
</dbReference>
<dbReference type="GO" id="GO:0005886">
    <property type="term" value="C:plasma membrane"/>
    <property type="evidence" value="ECO:0007005"/>
    <property type="project" value="MTBBASE"/>
</dbReference>
<dbReference type="GO" id="GO:0016705">
    <property type="term" value="F:oxidoreductase activity, acting on paired donors, with incorporation or reduction of molecular oxygen"/>
    <property type="evidence" value="ECO:0007669"/>
    <property type="project" value="InterPro"/>
</dbReference>
<dbReference type="GO" id="GO:0006629">
    <property type="term" value="P:lipid metabolic process"/>
    <property type="evidence" value="ECO:0007669"/>
    <property type="project" value="UniProtKB-KW"/>
</dbReference>
<dbReference type="CDD" id="cd01097">
    <property type="entry name" value="Tetrahydromethanopterin_reductase"/>
    <property type="match status" value="1"/>
</dbReference>
<dbReference type="FunFam" id="3.20.20.30:FF:000024">
    <property type="entry name" value="F420-dependent glucose-6-phosphate dehydrogenase"/>
    <property type="match status" value="1"/>
</dbReference>
<dbReference type="Gene3D" id="3.20.20.30">
    <property type="entry name" value="Luciferase-like domain"/>
    <property type="match status" value="1"/>
</dbReference>
<dbReference type="InterPro" id="IPR050564">
    <property type="entry name" value="F420-G6PD/mer"/>
</dbReference>
<dbReference type="InterPro" id="IPR031017">
    <property type="entry name" value="F420_FGD2"/>
</dbReference>
<dbReference type="InterPro" id="IPR019945">
    <property type="entry name" value="F420_G6P_DH-rel"/>
</dbReference>
<dbReference type="InterPro" id="IPR011251">
    <property type="entry name" value="Luciferase-like_dom"/>
</dbReference>
<dbReference type="InterPro" id="IPR036661">
    <property type="entry name" value="Luciferase-like_sf"/>
</dbReference>
<dbReference type="NCBIfam" id="TIGR04465">
    <property type="entry name" value="ArgArg_F420"/>
    <property type="match status" value="1"/>
</dbReference>
<dbReference type="NCBIfam" id="TIGR03557">
    <property type="entry name" value="F420_G6P_family"/>
    <property type="match status" value="1"/>
</dbReference>
<dbReference type="PANTHER" id="PTHR43244">
    <property type="match status" value="1"/>
</dbReference>
<dbReference type="PANTHER" id="PTHR43244:SF1">
    <property type="entry name" value="5,10-METHYLENETETRAHYDROMETHANOPTERIN REDUCTASE"/>
    <property type="match status" value="1"/>
</dbReference>
<dbReference type="Pfam" id="PF00296">
    <property type="entry name" value="Bac_luciferase"/>
    <property type="match status" value="1"/>
</dbReference>
<dbReference type="SUPFAM" id="SSF51679">
    <property type="entry name" value="Bacterial luciferase-like"/>
    <property type="match status" value="1"/>
</dbReference>